<protein>
    <recommendedName>
        <fullName>Phosphocarrier protein HPr</fullName>
    </recommendedName>
    <alternativeName>
        <fullName>Histidine-containing protein</fullName>
    </alternativeName>
</protein>
<name>PTHP_BACSU</name>
<dbReference type="EMBL" id="X12832">
    <property type="protein sequence ID" value="CAA31317.1"/>
    <property type="molecule type" value="Genomic_DNA"/>
</dbReference>
<dbReference type="EMBL" id="AL009126">
    <property type="protein sequence ID" value="CAB13263.1"/>
    <property type="molecule type" value="Genomic_DNA"/>
</dbReference>
<dbReference type="PIR" id="S04177">
    <property type="entry name" value="WQBSPH"/>
</dbReference>
<dbReference type="RefSeq" id="NP_389273.1">
    <property type="nucleotide sequence ID" value="NC_000964.3"/>
</dbReference>
<dbReference type="RefSeq" id="WP_003154654.1">
    <property type="nucleotide sequence ID" value="NZ_OZ025638.1"/>
</dbReference>
<dbReference type="PDB" id="1JEM">
    <property type="method" value="NMR"/>
    <property type="chains" value="A=2-88"/>
</dbReference>
<dbReference type="PDB" id="1KKL">
    <property type="method" value="X-ray"/>
    <property type="resolution" value="2.80 A"/>
    <property type="chains" value="H/I/J=1-88"/>
</dbReference>
<dbReference type="PDB" id="1KKM">
    <property type="method" value="X-ray"/>
    <property type="resolution" value="2.80 A"/>
    <property type="chains" value="H/I/J=1-88"/>
</dbReference>
<dbReference type="PDB" id="1SPH">
    <property type="method" value="X-ray"/>
    <property type="resolution" value="2.00 A"/>
    <property type="chains" value="A/B=1-88"/>
</dbReference>
<dbReference type="PDB" id="2FEP">
    <property type="method" value="X-ray"/>
    <property type="resolution" value="2.45 A"/>
    <property type="chains" value="S=2-88"/>
</dbReference>
<dbReference type="PDB" id="2HID">
    <property type="method" value="NMR"/>
    <property type="chains" value="A=2-88"/>
</dbReference>
<dbReference type="PDB" id="2HPR">
    <property type="method" value="X-ray"/>
    <property type="resolution" value="2.00 A"/>
    <property type="chains" value="A=2-88"/>
</dbReference>
<dbReference type="PDB" id="3OQM">
    <property type="method" value="X-ray"/>
    <property type="resolution" value="2.96 A"/>
    <property type="chains" value="D/S=2-88"/>
</dbReference>
<dbReference type="PDB" id="3OQN">
    <property type="method" value="X-ray"/>
    <property type="resolution" value="3.30 A"/>
    <property type="chains" value="D/S=2-88"/>
</dbReference>
<dbReference type="PDB" id="3OQO">
    <property type="method" value="X-ray"/>
    <property type="resolution" value="2.97 A"/>
    <property type="chains" value="D/S=2-88"/>
</dbReference>
<dbReference type="PDBsum" id="1JEM"/>
<dbReference type="PDBsum" id="1KKL"/>
<dbReference type="PDBsum" id="1KKM"/>
<dbReference type="PDBsum" id="1SPH"/>
<dbReference type="PDBsum" id="2FEP"/>
<dbReference type="PDBsum" id="2HID"/>
<dbReference type="PDBsum" id="2HPR"/>
<dbReference type="PDBsum" id="3OQM"/>
<dbReference type="PDBsum" id="3OQN"/>
<dbReference type="PDBsum" id="3OQO"/>
<dbReference type="BMRB" id="P08877"/>
<dbReference type="SMR" id="P08877"/>
<dbReference type="FunCoup" id="P08877">
    <property type="interactions" value="79"/>
</dbReference>
<dbReference type="IntAct" id="P08877">
    <property type="interactions" value="5"/>
</dbReference>
<dbReference type="MINT" id="P08877"/>
<dbReference type="STRING" id="224308.BSU13900"/>
<dbReference type="DrugBank" id="DB01899">
    <property type="generic name" value="Nd1-Phosphonohistidine"/>
</dbReference>
<dbReference type="iPTMnet" id="P08877"/>
<dbReference type="jPOST" id="P08877"/>
<dbReference type="PaxDb" id="224308-BSU13900"/>
<dbReference type="EnsemblBacteria" id="CAB13263">
    <property type="protein sequence ID" value="CAB13263"/>
    <property type="gene ID" value="BSU_13900"/>
</dbReference>
<dbReference type="GeneID" id="939259"/>
<dbReference type="KEGG" id="bsu:BSU13900"/>
<dbReference type="PATRIC" id="fig|224308.179.peg.1516"/>
<dbReference type="eggNOG" id="COG1925">
    <property type="taxonomic scope" value="Bacteria"/>
</dbReference>
<dbReference type="InParanoid" id="P08877"/>
<dbReference type="OrthoDB" id="9809047at2"/>
<dbReference type="PhylomeDB" id="P08877"/>
<dbReference type="BioCyc" id="BSUB:BSU13900-MONOMER"/>
<dbReference type="EvolutionaryTrace" id="P08877"/>
<dbReference type="PRO" id="PR:P08877"/>
<dbReference type="Proteomes" id="UP000001570">
    <property type="component" value="Chromosome"/>
</dbReference>
<dbReference type="GO" id="GO:0005737">
    <property type="term" value="C:cytoplasm"/>
    <property type="evidence" value="ECO:0007669"/>
    <property type="project" value="UniProtKB-SubCell"/>
</dbReference>
<dbReference type="GO" id="GO:0009401">
    <property type="term" value="P:phosphoenolpyruvate-dependent sugar phosphotransferase system"/>
    <property type="evidence" value="ECO:0000318"/>
    <property type="project" value="GO_Central"/>
</dbReference>
<dbReference type="GO" id="GO:0043610">
    <property type="term" value="P:regulation of carbohydrate utilization"/>
    <property type="evidence" value="ECO:0000315"/>
    <property type="project" value="CACAO"/>
</dbReference>
<dbReference type="CDD" id="cd00367">
    <property type="entry name" value="PTS-HPr_like"/>
    <property type="match status" value="1"/>
</dbReference>
<dbReference type="FunFam" id="3.30.1340.10:FF:000003">
    <property type="entry name" value="Phosphocarrier protein HPr"/>
    <property type="match status" value="1"/>
</dbReference>
<dbReference type="Gene3D" id="3.30.1340.10">
    <property type="entry name" value="HPr-like"/>
    <property type="match status" value="1"/>
</dbReference>
<dbReference type="InterPro" id="IPR050399">
    <property type="entry name" value="HPr"/>
</dbReference>
<dbReference type="InterPro" id="IPR000032">
    <property type="entry name" value="HPr-like"/>
</dbReference>
<dbReference type="InterPro" id="IPR035895">
    <property type="entry name" value="HPr-like_sf"/>
</dbReference>
<dbReference type="InterPro" id="IPR001020">
    <property type="entry name" value="PTS_HPr_His_P_site"/>
</dbReference>
<dbReference type="InterPro" id="IPR002114">
    <property type="entry name" value="PTS_HPr_Ser_P_site"/>
</dbReference>
<dbReference type="NCBIfam" id="NF010352">
    <property type="entry name" value="PRK13780.1"/>
    <property type="match status" value="1"/>
</dbReference>
<dbReference type="NCBIfam" id="TIGR01003">
    <property type="entry name" value="PTS_HPr_family"/>
    <property type="match status" value="1"/>
</dbReference>
<dbReference type="PANTHER" id="PTHR33705">
    <property type="entry name" value="PHOSPHOCARRIER PROTEIN HPR"/>
    <property type="match status" value="1"/>
</dbReference>
<dbReference type="PANTHER" id="PTHR33705:SF2">
    <property type="entry name" value="PHOSPHOCARRIER PROTEIN NPR"/>
    <property type="match status" value="1"/>
</dbReference>
<dbReference type="Pfam" id="PF00381">
    <property type="entry name" value="PTS-HPr"/>
    <property type="match status" value="1"/>
</dbReference>
<dbReference type="PRINTS" id="PR00107">
    <property type="entry name" value="PHOSPHOCPHPR"/>
</dbReference>
<dbReference type="SUPFAM" id="SSF55594">
    <property type="entry name" value="HPr-like"/>
    <property type="match status" value="1"/>
</dbReference>
<dbReference type="PROSITE" id="PS51350">
    <property type="entry name" value="PTS_HPR_DOM"/>
    <property type="match status" value="1"/>
</dbReference>
<dbReference type="PROSITE" id="PS00369">
    <property type="entry name" value="PTS_HPR_HIS"/>
    <property type="match status" value="1"/>
</dbReference>
<dbReference type="PROSITE" id="PS00589">
    <property type="entry name" value="PTS_HPR_SER"/>
    <property type="match status" value="1"/>
</dbReference>
<feature type="initiator methionine" description="Removed" evidence="2 7">
    <location>
        <position position="1"/>
    </location>
</feature>
<feature type="chain" id="PRO_0000107842" description="Phosphocarrier protein HPr">
    <location>
        <begin position="2"/>
        <end position="88"/>
    </location>
</feature>
<feature type="domain" description="HPr" evidence="1">
    <location>
        <begin position="2"/>
        <end position="88"/>
    </location>
</feature>
<feature type="active site" description="Pros-phosphohistidine intermediate; alternate" evidence="1 3">
    <location>
        <position position="15"/>
    </location>
</feature>
<feature type="modified residue" description="Phosphoserine" evidence="5">
    <location>
        <position position="12"/>
    </location>
</feature>
<feature type="modified residue" description="Tele-phosphohistidine; alternate" evidence="3">
    <location>
        <position position="15"/>
    </location>
</feature>
<feature type="modified residue" description="Phosphoserine; by HPrK/P" evidence="1 5">
    <location>
        <position position="46"/>
    </location>
</feature>
<feature type="mutagenesis site" description="No phosphorylation by HPrK/P; abolishes the catabolite repressive effects of glucose on gluconate kinase, glucitol dehydrogenase, and the mannitol-specific catabolic enzymes." evidence="6">
    <original>S</original>
    <variation>A</variation>
    <location>
        <position position="46"/>
    </location>
</feature>
<feature type="strand" evidence="9">
    <location>
        <begin position="3"/>
        <end position="8"/>
    </location>
</feature>
<feature type="strand" evidence="10">
    <location>
        <begin position="10"/>
        <end position="12"/>
    </location>
</feature>
<feature type="helix" evidence="9">
    <location>
        <begin position="16"/>
        <end position="26"/>
    </location>
</feature>
<feature type="strand" evidence="9">
    <location>
        <begin position="29"/>
        <end position="37"/>
    </location>
</feature>
<feature type="strand" evidence="9">
    <location>
        <begin position="40"/>
        <end position="43"/>
    </location>
</feature>
<feature type="helix" evidence="9">
    <location>
        <begin position="47"/>
        <end position="53"/>
    </location>
</feature>
<feature type="strand" evidence="9">
    <location>
        <begin position="60"/>
        <end position="67"/>
    </location>
</feature>
<feature type="helix" evidence="9">
    <location>
        <begin position="70"/>
        <end position="83"/>
    </location>
</feature>
<sequence>MAQKTFKVTADSGIHARPATVLVQTASKYDADVNLEYNGKTVNLKSIMGVMSLGIAKGAEITISASGADENDALNALEETMKSEGLGE</sequence>
<keyword id="KW-0002">3D-structure</keyword>
<keyword id="KW-0963">Cytoplasm</keyword>
<keyword id="KW-0903">Direct protein sequencing</keyword>
<keyword id="KW-0597">Phosphoprotein</keyword>
<keyword id="KW-0598">Phosphotransferase system</keyword>
<keyword id="KW-1185">Reference proteome</keyword>
<keyword id="KW-0762">Sugar transport</keyword>
<keyword id="KW-0804">Transcription</keyword>
<keyword id="KW-0805">Transcription regulation</keyword>
<keyword id="KW-0813">Transport</keyword>
<evidence type="ECO:0000255" key="1">
    <source>
        <dbReference type="PROSITE-ProRule" id="PRU00681"/>
    </source>
</evidence>
<evidence type="ECO:0000269" key="2">
    <source>
    </source>
</evidence>
<evidence type="ECO:0000269" key="3">
    <source>
    </source>
</evidence>
<evidence type="ECO:0000269" key="4">
    <source>
    </source>
</evidence>
<evidence type="ECO:0000269" key="5">
    <source>
    </source>
</evidence>
<evidence type="ECO:0000269" key="6">
    <source>
    </source>
</evidence>
<evidence type="ECO:0000269" key="7">
    <source>
    </source>
</evidence>
<evidence type="ECO:0000305" key="8"/>
<evidence type="ECO:0007829" key="9">
    <source>
        <dbReference type="PDB" id="1SPH"/>
    </source>
</evidence>
<evidence type="ECO:0007829" key="10">
    <source>
        <dbReference type="PDB" id="3OQN"/>
    </source>
</evidence>
<organism>
    <name type="scientific">Bacillus subtilis (strain 168)</name>
    <dbReference type="NCBI Taxonomy" id="224308"/>
    <lineage>
        <taxon>Bacteria</taxon>
        <taxon>Bacillati</taxon>
        <taxon>Bacillota</taxon>
        <taxon>Bacilli</taxon>
        <taxon>Bacillales</taxon>
        <taxon>Bacillaceae</taxon>
        <taxon>Bacillus</taxon>
    </lineage>
</organism>
<gene>
    <name type="primary">ptsH</name>
    <name type="ordered locus">BSU13900</name>
</gene>
<accession>P08877</accession>
<comment type="function">
    <text>General (non sugar-specific) component of the phosphoenolpyruvate-dependent sugar phosphotransferase system (sugar PTS). This major carbohydrate active-transport system catalyzes the phosphorylation of incoming sugar substrates concomitantly with their translocation across the cell membrane. The phosphoryl group from phosphoenolpyruvate (PEP) is transferred to the phosphoryl carrier protein HPr by enzyme I. Phospho-HPr then transfers it to the PTS EIIA domain.</text>
</comment>
<comment type="function">
    <text>P-Ser-HPr interacts with the catabolite control protein A (CcpA), forming a complex that binds to DNA at the catabolite response elements cre, operator sites preceding a large number of catabolite-regulated genes. Thus, P-Ser-HPr is a corepressor in carbon catabolite repression (CCR), a mechanism that allows bacteria to coordinate and optimize the utilization of available carbon sources. P-Ser-HPr also plays a role in inducer exclusion, in which it probably interacts with several non-PTS permeases and inhibits their transport activity.</text>
</comment>
<comment type="activity regulation">
    <text>Phosphorylation on Ser-46 inhibits the phosphoryl transfer from enzyme I to HPr.</text>
</comment>
<comment type="interaction">
    <interactant intactId="EBI-1034482">
        <id>P08877</id>
    </interactant>
    <interactant intactId="EBI-5247535">
        <id>P25144</id>
        <label>ccpA</label>
    </interactant>
    <organismsDiffer>false</organismsDiffer>
    <experiments>3</experiments>
</comment>
<comment type="subcellular location">
    <subcellularLocation>
        <location>Cytoplasm</location>
    </subcellularLocation>
</comment>
<comment type="PTM">
    <text evidence="4">Phosphorylated during sporulation.</text>
</comment>
<comment type="similarity">
    <text evidence="8">Belongs to the HPr family.</text>
</comment>
<proteinExistence type="evidence at protein level"/>
<reference key="1">
    <citation type="journal article" date="1989" name="Mol. Microbiol.">
        <title>Phosphoenolpyruvate:sugar phosphotransferase system of Bacillus subtilis: nucleotide sequence of ptsX, ptsH and the 5'-end of ptsI and evidence for a ptsHI operon.</title>
        <authorList>
            <person name="Gonzy-Treboul G."/>
            <person name="Zagorec M."/>
            <person name="Rain-Guion M.-C."/>
            <person name="Steinmetz M."/>
        </authorList>
    </citation>
    <scope>NUCLEOTIDE SEQUENCE [GENOMIC DNA]</scope>
    <source>
        <strain>168</strain>
    </source>
</reference>
<reference key="2">
    <citation type="journal article" date="1997" name="Nature">
        <title>The complete genome sequence of the Gram-positive bacterium Bacillus subtilis.</title>
        <authorList>
            <person name="Kunst F."/>
            <person name="Ogasawara N."/>
            <person name="Moszer I."/>
            <person name="Albertini A.M."/>
            <person name="Alloni G."/>
            <person name="Azevedo V."/>
            <person name="Bertero M.G."/>
            <person name="Bessieres P."/>
            <person name="Bolotin A."/>
            <person name="Borchert S."/>
            <person name="Borriss R."/>
            <person name="Boursier L."/>
            <person name="Brans A."/>
            <person name="Braun M."/>
            <person name="Brignell S.C."/>
            <person name="Bron S."/>
            <person name="Brouillet S."/>
            <person name="Bruschi C.V."/>
            <person name="Caldwell B."/>
            <person name="Capuano V."/>
            <person name="Carter N.M."/>
            <person name="Choi S.-K."/>
            <person name="Codani J.-J."/>
            <person name="Connerton I.F."/>
            <person name="Cummings N.J."/>
            <person name="Daniel R.A."/>
            <person name="Denizot F."/>
            <person name="Devine K.M."/>
            <person name="Duesterhoeft A."/>
            <person name="Ehrlich S.D."/>
            <person name="Emmerson P.T."/>
            <person name="Entian K.-D."/>
            <person name="Errington J."/>
            <person name="Fabret C."/>
            <person name="Ferrari E."/>
            <person name="Foulger D."/>
            <person name="Fritz C."/>
            <person name="Fujita M."/>
            <person name="Fujita Y."/>
            <person name="Fuma S."/>
            <person name="Galizzi A."/>
            <person name="Galleron N."/>
            <person name="Ghim S.-Y."/>
            <person name="Glaser P."/>
            <person name="Goffeau A."/>
            <person name="Golightly E.J."/>
            <person name="Grandi G."/>
            <person name="Guiseppi G."/>
            <person name="Guy B.J."/>
            <person name="Haga K."/>
            <person name="Haiech J."/>
            <person name="Harwood C.R."/>
            <person name="Henaut A."/>
            <person name="Hilbert H."/>
            <person name="Holsappel S."/>
            <person name="Hosono S."/>
            <person name="Hullo M.-F."/>
            <person name="Itaya M."/>
            <person name="Jones L.-M."/>
            <person name="Joris B."/>
            <person name="Karamata D."/>
            <person name="Kasahara Y."/>
            <person name="Klaerr-Blanchard M."/>
            <person name="Klein C."/>
            <person name="Kobayashi Y."/>
            <person name="Koetter P."/>
            <person name="Koningstein G."/>
            <person name="Krogh S."/>
            <person name="Kumano M."/>
            <person name="Kurita K."/>
            <person name="Lapidus A."/>
            <person name="Lardinois S."/>
            <person name="Lauber J."/>
            <person name="Lazarevic V."/>
            <person name="Lee S.-M."/>
            <person name="Levine A."/>
            <person name="Liu H."/>
            <person name="Masuda S."/>
            <person name="Mauel C."/>
            <person name="Medigue C."/>
            <person name="Medina N."/>
            <person name="Mellado R.P."/>
            <person name="Mizuno M."/>
            <person name="Moestl D."/>
            <person name="Nakai S."/>
            <person name="Noback M."/>
            <person name="Noone D."/>
            <person name="O'Reilly M."/>
            <person name="Ogawa K."/>
            <person name="Ogiwara A."/>
            <person name="Oudega B."/>
            <person name="Park S.-H."/>
            <person name="Parro V."/>
            <person name="Pohl T.M."/>
            <person name="Portetelle D."/>
            <person name="Porwollik S."/>
            <person name="Prescott A.M."/>
            <person name="Presecan E."/>
            <person name="Pujic P."/>
            <person name="Purnelle B."/>
            <person name="Rapoport G."/>
            <person name="Rey M."/>
            <person name="Reynolds S."/>
            <person name="Rieger M."/>
            <person name="Rivolta C."/>
            <person name="Rocha E."/>
            <person name="Roche B."/>
            <person name="Rose M."/>
            <person name="Sadaie Y."/>
            <person name="Sato T."/>
            <person name="Scanlan E."/>
            <person name="Schleich S."/>
            <person name="Schroeter R."/>
            <person name="Scoffone F."/>
            <person name="Sekiguchi J."/>
            <person name="Sekowska A."/>
            <person name="Seror S.J."/>
            <person name="Serror P."/>
            <person name="Shin B.-S."/>
            <person name="Soldo B."/>
            <person name="Sorokin A."/>
            <person name="Tacconi E."/>
            <person name="Takagi T."/>
            <person name="Takahashi H."/>
            <person name="Takemaru K."/>
            <person name="Takeuchi M."/>
            <person name="Tamakoshi A."/>
            <person name="Tanaka T."/>
            <person name="Terpstra P."/>
            <person name="Tognoni A."/>
            <person name="Tosato V."/>
            <person name="Uchiyama S."/>
            <person name="Vandenbol M."/>
            <person name="Vannier F."/>
            <person name="Vassarotti A."/>
            <person name="Viari A."/>
            <person name="Wambutt R."/>
            <person name="Wedler E."/>
            <person name="Wedler H."/>
            <person name="Weitzenegger T."/>
            <person name="Winters P."/>
            <person name="Wipat A."/>
            <person name="Yamamoto H."/>
            <person name="Yamane K."/>
            <person name="Yasumoto K."/>
            <person name="Yata K."/>
            <person name="Yoshida K."/>
            <person name="Yoshikawa H.-F."/>
            <person name="Zumstein E."/>
            <person name="Yoshikawa H."/>
            <person name="Danchin A."/>
        </authorList>
    </citation>
    <scope>NUCLEOTIDE SEQUENCE [LARGE SCALE GENOMIC DNA]</scope>
    <source>
        <strain>168</strain>
    </source>
</reference>
<reference key="3">
    <citation type="journal article" date="1992" name="J. Bacteriol.">
        <title>Identification of proteins phosphorylated by ATP during sporulation of Bacillus subtilis.</title>
        <authorList>
            <person name="Mitchell C."/>
            <person name="Morris P.W."/>
            <person name="Vary J.C."/>
        </authorList>
    </citation>
    <scope>PROTEIN SEQUENCE OF 1-19</scope>
    <scope>PHOSPHORYLATION</scope>
    <source>
        <strain>168 / DB100</strain>
    </source>
</reference>
<reference key="4">
    <citation type="journal article" date="1992" name="Mol. Microbiol.">
        <title>Amino acid sequences of several Bacillus subtilis proteins modified by apparent guanylylation.</title>
        <authorList>
            <person name="Mitchell C."/>
            <person name="Morris P.W."/>
            <person name="Vary J.C."/>
        </authorList>
    </citation>
    <scope>PROTEIN SEQUENCE OF 2-21</scope>
</reference>
<reference key="5">
    <citation type="journal article" date="1996" name="J. Bacteriol.">
        <title>Cold shock stress-induced proteins in Bacillus subtilis.</title>
        <authorList>
            <person name="Graumann P."/>
            <person name="Schroeder K."/>
            <person name="Schmid R."/>
            <person name="Marahiel M.A."/>
        </authorList>
    </citation>
    <scope>PROTEIN SEQUENCE OF 2-27</scope>
    <source>
        <strain>168 / JH642</strain>
    </source>
</reference>
<reference key="6">
    <citation type="journal article" date="1994" name="J. Bacteriol.">
        <title>Loss of protein kinase-catalyzed phosphorylation of HPr, a phosphocarrier protein of the phosphotransferase system, by mutation of the ptsH gene confers catabolite repression resistance to several catabolic genes of Bacillus subtilis.</title>
        <authorList>
            <person name="Deutscher J."/>
            <person name="Reizer J."/>
            <person name="Fischer C."/>
            <person name="Galinier A."/>
            <person name="Saier M.H. Jr."/>
            <person name="Steinmetz M."/>
        </authorList>
    </citation>
    <scope>FUNCTION</scope>
    <scope>MUTAGENESIS OF SER-46</scope>
</reference>
<reference key="7">
    <citation type="journal article" date="1995" name="Mol. Microbiol.">
        <title>Specific recognition of the Bacillus subtilis gnt cis-acting catabolite-responsive element by a protein complex formed between CcpA and seryl-phosphorylated HPr.</title>
        <authorList>
            <person name="Fujita Y."/>
            <person name="Miwa Y."/>
            <person name="Galinier A."/>
            <person name="Deutscher J."/>
        </authorList>
    </citation>
    <scope>FUNCTION</scope>
</reference>
<reference key="8">
    <citation type="journal article" date="2007" name="Mol. Cell. Proteomics">
        <title>The serine/threonine/tyrosine phosphoproteome of the model bacterium Bacillus subtilis.</title>
        <authorList>
            <person name="Macek B."/>
            <person name="Mijakovic I."/>
            <person name="Olsen J.V."/>
            <person name="Gnad F."/>
            <person name="Kumar C."/>
            <person name="Jensen P.R."/>
            <person name="Mann M."/>
        </authorList>
    </citation>
    <scope>PHOSPHORYLATION [LARGE SCALE ANALYSIS] AT SER-12 AND SER-46</scope>
    <scope>IDENTIFICATION BY MASS SPECTROMETRY</scope>
    <source>
        <strain>168</strain>
    </source>
</reference>
<reference key="9">
    <citation type="journal article" date="1992" name="Proc. Natl. Acad. Sci. U.S.A.">
        <title>Structure of the histidine-containing phosphocarrier protein HPr from Bacillus subtilis at 2.0-A resolution.</title>
        <authorList>
            <person name="Herzberg O."/>
            <person name="Reddy P."/>
            <person name="Sutrina S."/>
            <person name="Saier M.H. Jr."/>
            <person name="Reizer J."/>
            <person name="Kapadia G."/>
        </authorList>
    </citation>
    <scope>X-RAY CRYSTALLOGRAPHY (2.0 ANGSTROMS)</scope>
    <scope>ACTIVE SITE HIS-15</scope>
    <scope>PHOSPHORYLATION AT HIS-15</scope>
</reference>
<reference key="10">
    <citation type="journal article" date="1994" name="Structure">
        <title>Refined structures of the active Ser83--&gt;Cys and impaired Ser46--&gt;Asp histidine-containing phosphocarrier proteins.</title>
        <authorList>
            <person name="Liao D.-I."/>
            <person name="Herzberg O."/>
        </authorList>
    </citation>
    <scope>X-RAY CRYSTALLOGRAPHY (2.0 ANGSTROMS) OF MUTANTS</scope>
</reference>
<reference key="11">
    <citation type="journal article" date="1990" name="Biochemistry">
        <title>Sequence-specific 1H NMR resonance assignments of Bacillus subtilis HPr: use of spectra obtained from mutants to resolve spectral overlap.</title>
        <authorList>
            <person name="Wittekind M."/>
            <person name="Reizer J."/>
            <person name="Klevit R.E."/>
        </authorList>
    </citation>
    <scope>STRUCTURE BY NMR</scope>
</reference>
<reference key="12">
    <citation type="journal article" date="1992" name="Protein Sci.">
        <title>Solution structure of the phosphocarrier protein HPr from Bacillus subtilis by two-dimensional NMR spectroscopy.</title>
        <authorList>
            <person name="Wittekind M."/>
            <person name="Rajagopal P."/>
            <person name="Branchini B.R."/>
            <person name="Reizer J."/>
            <person name="Saier M.H. Jr."/>
            <person name="Klevit R.E."/>
        </authorList>
    </citation>
    <scope>STRUCTURE BY NMR</scope>
</reference>
<reference key="13">
    <citation type="journal article" date="1997" name="Protein Sci.">
        <title>Phosphorylation on histidine is accompanied by localized structural changes in the phosphocarrier protein, HPr from Bacillus subtilis.</title>
        <authorList>
            <person name="Jones B.E."/>
            <person name="Rajagopal P."/>
            <person name="Klevit R.E."/>
        </authorList>
    </citation>
    <scope>STRUCTURE BY NMR</scope>
</reference>
<reference key="14">
    <citation type="journal article" date="2002" name="Proc. Natl. Acad. Sci. U.S.A.">
        <title>X-ray structure of a bifunctional protein kinase in complex with its protein substrate HPr.</title>
        <authorList>
            <person name="Fieulaine S."/>
            <person name="Morera S."/>
            <person name="Poncet S."/>
            <person name="Mijakovic I."/>
            <person name="Galinier A."/>
            <person name="Janin J."/>
            <person name="Deutscher J."/>
            <person name="Nessler S."/>
        </authorList>
    </citation>
    <scope>X-RAY CRYSTALLOGRAPHY (2.8 ANGSTROMS) OF 16-88 IN COMPLEX WITH L.CASEI HPRK/P</scope>
</reference>